<proteinExistence type="inferred from homology"/>
<dbReference type="EC" id="3.1.-.-" evidence="1"/>
<dbReference type="EMBL" id="AM711867">
    <property type="protein sequence ID" value="CAN01857.1"/>
    <property type="molecule type" value="Genomic_DNA"/>
</dbReference>
<dbReference type="RefSeq" id="WP_012038489.1">
    <property type="nucleotide sequence ID" value="NC_009480.1"/>
</dbReference>
<dbReference type="SMR" id="A5CRZ4"/>
<dbReference type="KEGG" id="cmi:CMM_1801"/>
<dbReference type="eggNOG" id="COG0816">
    <property type="taxonomic scope" value="Bacteria"/>
</dbReference>
<dbReference type="HOGENOM" id="CLU_098240_0_0_11"/>
<dbReference type="OrthoDB" id="9790539at2"/>
<dbReference type="Proteomes" id="UP000001564">
    <property type="component" value="Chromosome"/>
</dbReference>
<dbReference type="GO" id="GO:0005829">
    <property type="term" value="C:cytosol"/>
    <property type="evidence" value="ECO:0007669"/>
    <property type="project" value="TreeGrafter"/>
</dbReference>
<dbReference type="GO" id="GO:0004518">
    <property type="term" value="F:nuclease activity"/>
    <property type="evidence" value="ECO:0007669"/>
    <property type="project" value="UniProtKB-KW"/>
</dbReference>
<dbReference type="GO" id="GO:0000967">
    <property type="term" value="P:rRNA 5'-end processing"/>
    <property type="evidence" value="ECO:0007669"/>
    <property type="project" value="UniProtKB-UniRule"/>
</dbReference>
<dbReference type="CDD" id="cd16964">
    <property type="entry name" value="YqgF"/>
    <property type="match status" value="1"/>
</dbReference>
<dbReference type="Gene3D" id="3.30.420.140">
    <property type="entry name" value="YqgF/RNase H-like domain"/>
    <property type="match status" value="1"/>
</dbReference>
<dbReference type="HAMAP" id="MF_00651">
    <property type="entry name" value="Nuclease_YqgF"/>
    <property type="match status" value="1"/>
</dbReference>
<dbReference type="InterPro" id="IPR012337">
    <property type="entry name" value="RNaseH-like_sf"/>
</dbReference>
<dbReference type="InterPro" id="IPR005227">
    <property type="entry name" value="YqgF"/>
</dbReference>
<dbReference type="InterPro" id="IPR006641">
    <property type="entry name" value="YqgF/RNaseH-like_dom"/>
</dbReference>
<dbReference type="InterPro" id="IPR037027">
    <property type="entry name" value="YqgF/RNaseH-like_dom_sf"/>
</dbReference>
<dbReference type="NCBIfam" id="TIGR00250">
    <property type="entry name" value="RNAse_H_YqgF"/>
    <property type="match status" value="1"/>
</dbReference>
<dbReference type="PANTHER" id="PTHR33317">
    <property type="entry name" value="POLYNUCLEOTIDYL TRANSFERASE, RIBONUCLEASE H-LIKE SUPERFAMILY PROTEIN"/>
    <property type="match status" value="1"/>
</dbReference>
<dbReference type="PANTHER" id="PTHR33317:SF4">
    <property type="entry name" value="POLYNUCLEOTIDYL TRANSFERASE, RIBONUCLEASE H-LIKE SUPERFAMILY PROTEIN"/>
    <property type="match status" value="1"/>
</dbReference>
<dbReference type="Pfam" id="PF03652">
    <property type="entry name" value="RuvX"/>
    <property type="match status" value="1"/>
</dbReference>
<dbReference type="SMART" id="SM00732">
    <property type="entry name" value="YqgFc"/>
    <property type="match status" value="1"/>
</dbReference>
<dbReference type="SUPFAM" id="SSF53098">
    <property type="entry name" value="Ribonuclease H-like"/>
    <property type="match status" value="1"/>
</dbReference>
<feature type="chain" id="PRO_1000061503" description="Putative pre-16S rRNA nuclease">
    <location>
        <begin position="1"/>
        <end position="161"/>
    </location>
</feature>
<feature type="region of interest" description="Disordered" evidence="2">
    <location>
        <begin position="141"/>
        <end position="161"/>
    </location>
</feature>
<sequence>MRLGSRLAVDVGKARIGLARSDPHGLIATPVETVPRDPAGSADVRRILAVATEIDCAELVVGLPLALSGRATASTDDAEGFARRLADATEIPVRLVDERLSTVSAQGALRASGRGSRKQKPVIDQVAAVIILQHALETERAAGSPPGALVPRNRVDPDRHA</sequence>
<gene>
    <name type="ordered locus">CMM_1801</name>
</gene>
<protein>
    <recommendedName>
        <fullName evidence="1">Putative pre-16S rRNA nuclease</fullName>
        <ecNumber evidence="1">3.1.-.-</ecNumber>
    </recommendedName>
</protein>
<keyword id="KW-0963">Cytoplasm</keyword>
<keyword id="KW-0378">Hydrolase</keyword>
<keyword id="KW-0540">Nuclease</keyword>
<keyword id="KW-0690">Ribosome biogenesis</keyword>
<organism>
    <name type="scientific">Clavibacter michiganensis subsp. michiganensis (strain NCPPB 382)</name>
    <dbReference type="NCBI Taxonomy" id="443906"/>
    <lineage>
        <taxon>Bacteria</taxon>
        <taxon>Bacillati</taxon>
        <taxon>Actinomycetota</taxon>
        <taxon>Actinomycetes</taxon>
        <taxon>Micrococcales</taxon>
        <taxon>Microbacteriaceae</taxon>
        <taxon>Clavibacter</taxon>
    </lineage>
</organism>
<comment type="function">
    <text evidence="1">Could be a nuclease involved in processing of the 5'-end of pre-16S rRNA.</text>
</comment>
<comment type="subcellular location">
    <subcellularLocation>
        <location evidence="1">Cytoplasm</location>
    </subcellularLocation>
</comment>
<comment type="similarity">
    <text evidence="1">Belongs to the YqgF nuclease family.</text>
</comment>
<accession>A5CRZ4</accession>
<name>YQGF_CLAM3</name>
<reference key="1">
    <citation type="journal article" date="2008" name="J. Bacteriol.">
        <title>The genome sequence of the tomato-pathogenic actinomycete Clavibacter michiganensis subsp. michiganensis NCPPB382 reveals a large island involved in pathogenicity.</title>
        <authorList>
            <person name="Gartemann K.-H."/>
            <person name="Abt B."/>
            <person name="Bekel T."/>
            <person name="Burger A."/>
            <person name="Engemann J."/>
            <person name="Fluegel M."/>
            <person name="Gaigalat L."/>
            <person name="Goesmann A."/>
            <person name="Graefen I."/>
            <person name="Kalinowski J."/>
            <person name="Kaup O."/>
            <person name="Kirchner O."/>
            <person name="Krause L."/>
            <person name="Linke B."/>
            <person name="McHardy A."/>
            <person name="Meyer F."/>
            <person name="Pohle S."/>
            <person name="Rueckert C."/>
            <person name="Schneiker S."/>
            <person name="Zellermann E.-M."/>
            <person name="Puehler A."/>
            <person name="Eichenlaub R."/>
            <person name="Kaiser O."/>
            <person name="Bartels D."/>
        </authorList>
    </citation>
    <scope>NUCLEOTIDE SEQUENCE [LARGE SCALE GENOMIC DNA]</scope>
    <source>
        <strain>NCPPB 382</strain>
    </source>
</reference>
<evidence type="ECO:0000255" key="1">
    <source>
        <dbReference type="HAMAP-Rule" id="MF_00651"/>
    </source>
</evidence>
<evidence type="ECO:0000256" key="2">
    <source>
        <dbReference type="SAM" id="MobiDB-lite"/>
    </source>
</evidence>